<gene>
    <name evidence="1" type="primary">hemA</name>
    <name type="ordered locus">NGK_1655</name>
</gene>
<protein>
    <recommendedName>
        <fullName evidence="1">Glutamyl-tRNA reductase</fullName>
        <shortName evidence="1">GluTR</shortName>
        <ecNumber evidence="1">1.2.1.70</ecNumber>
    </recommendedName>
</protein>
<evidence type="ECO:0000255" key="1">
    <source>
        <dbReference type="HAMAP-Rule" id="MF_00087"/>
    </source>
</evidence>
<keyword id="KW-0521">NADP</keyword>
<keyword id="KW-0560">Oxidoreductase</keyword>
<keyword id="KW-0627">Porphyrin biosynthesis</keyword>
<organism>
    <name type="scientific">Neisseria gonorrhoeae (strain NCCP11945)</name>
    <dbReference type="NCBI Taxonomy" id="521006"/>
    <lineage>
        <taxon>Bacteria</taxon>
        <taxon>Pseudomonadati</taxon>
        <taxon>Pseudomonadota</taxon>
        <taxon>Betaproteobacteria</taxon>
        <taxon>Neisseriales</taxon>
        <taxon>Neisseriaceae</taxon>
        <taxon>Neisseria</taxon>
    </lineage>
</organism>
<name>HEM1_NEIG2</name>
<feature type="chain" id="PRO_1000093154" description="Glutamyl-tRNA reductase">
    <location>
        <begin position="1"/>
        <end position="415"/>
    </location>
</feature>
<feature type="active site" description="Nucleophile" evidence="1">
    <location>
        <position position="50"/>
    </location>
</feature>
<feature type="binding site" evidence="1">
    <location>
        <begin position="49"/>
        <end position="52"/>
    </location>
    <ligand>
        <name>substrate</name>
    </ligand>
</feature>
<feature type="binding site" evidence="1">
    <location>
        <position position="104"/>
    </location>
    <ligand>
        <name>substrate</name>
    </ligand>
</feature>
<feature type="binding site" evidence="1">
    <location>
        <begin position="109"/>
        <end position="111"/>
    </location>
    <ligand>
        <name>substrate</name>
    </ligand>
</feature>
<feature type="binding site" evidence="1">
    <location>
        <position position="115"/>
    </location>
    <ligand>
        <name>substrate</name>
    </ligand>
</feature>
<feature type="binding site" evidence="1">
    <location>
        <begin position="184"/>
        <end position="189"/>
    </location>
    <ligand>
        <name>NADP(+)</name>
        <dbReference type="ChEBI" id="CHEBI:58349"/>
    </ligand>
</feature>
<feature type="site" description="Important for activity" evidence="1">
    <location>
        <position position="94"/>
    </location>
</feature>
<proteinExistence type="inferred from homology"/>
<dbReference type="EC" id="1.2.1.70" evidence="1"/>
<dbReference type="EMBL" id="CP001050">
    <property type="protein sequence ID" value="ACF30304.1"/>
    <property type="molecule type" value="Genomic_DNA"/>
</dbReference>
<dbReference type="RefSeq" id="WP_003689254.1">
    <property type="nucleotide sequence ID" value="NC_011035.1"/>
</dbReference>
<dbReference type="SMR" id="B4RNE5"/>
<dbReference type="GeneID" id="66753617"/>
<dbReference type="KEGG" id="ngk:NGK_1655"/>
<dbReference type="HOGENOM" id="CLU_035113_2_2_4"/>
<dbReference type="UniPathway" id="UPA00251">
    <property type="reaction ID" value="UER00316"/>
</dbReference>
<dbReference type="Proteomes" id="UP000002564">
    <property type="component" value="Chromosome"/>
</dbReference>
<dbReference type="GO" id="GO:0008883">
    <property type="term" value="F:glutamyl-tRNA reductase activity"/>
    <property type="evidence" value="ECO:0007669"/>
    <property type="project" value="UniProtKB-UniRule"/>
</dbReference>
<dbReference type="GO" id="GO:0050661">
    <property type="term" value="F:NADP binding"/>
    <property type="evidence" value="ECO:0007669"/>
    <property type="project" value="InterPro"/>
</dbReference>
<dbReference type="GO" id="GO:0019353">
    <property type="term" value="P:protoporphyrinogen IX biosynthetic process from glutamate"/>
    <property type="evidence" value="ECO:0007669"/>
    <property type="project" value="TreeGrafter"/>
</dbReference>
<dbReference type="CDD" id="cd05213">
    <property type="entry name" value="NAD_bind_Glutamyl_tRNA_reduct"/>
    <property type="match status" value="1"/>
</dbReference>
<dbReference type="FunFam" id="3.30.460.30:FF:000001">
    <property type="entry name" value="Glutamyl-tRNA reductase"/>
    <property type="match status" value="1"/>
</dbReference>
<dbReference type="FunFam" id="3.40.50.720:FF:000031">
    <property type="entry name" value="Glutamyl-tRNA reductase"/>
    <property type="match status" value="1"/>
</dbReference>
<dbReference type="Gene3D" id="3.30.460.30">
    <property type="entry name" value="Glutamyl-tRNA reductase, N-terminal domain"/>
    <property type="match status" value="1"/>
</dbReference>
<dbReference type="Gene3D" id="3.40.50.720">
    <property type="entry name" value="NAD(P)-binding Rossmann-like Domain"/>
    <property type="match status" value="1"/>
</dbReference>
<dbReference type="HAMAP" id="MF_00087">
    <property type="entry name" value="Glu_tRNA_reductase"/>
    <property type="match status" value="1"/>
</dbReference>
<dbReference type="InterPro" id="IPR000343">
    <property type="entry name" value="4pyrrol_synth_GluRdtase"/>
</dbReference>
<dbReference type="InterPro" id="IPR015896">
    <property type="entry name" value="4pyrrol_synth_GluRdtase_dimer"/>
</dbReference>
<dbReference type="InterPro" id="IPR015895">
    <property type="entry name" value="4pyrrol_synth_GluRdtase_N"/>
</dbReference>
<dbReference type="InterPro" id="IPR018214">
    <property type="entry name" value="GluRdtase_CS"/>
</dbReference>
<dbReference type="InterPro" id="IPR036453">
    <property type="entry name" value="GluRdtase_dimer_dom_sf"/>
</dbReference>
<dbReference type="InterPro" id="IPR036343">
    <property type="entry name" value="GluRdtase_N_sf"/>
</dbReference>
<dbReference type="InterPro" id="IPR036291">
    <property type="entry name" value="NAD(P)-bd_dom_sf"/>
</dbReference>
<dbReference type="InterPro" id="IPR006151">
    <property type="entry name" value="Shikm_DH/Glu-tRNA_Rdtase"/>
</dbReference>
<dbReference type="NCBIfam" id="TIGR01035">
    <property type="entry name" value="hemA"/>
    <property type="match status" value="1"/>
</dbReference>
<dbReference type="PANTHER" id="PTHR43013">
    <property type="entry name" value="GLUTAMYL-TRNA REDUCTASE"/>
    <property type="match status" value="1"/>
</dbReference>
<dbReference type="PANTHER" id="PTHR43013:SF1">
    <property type="entry name" value="GLUTAMYL-TRNA REDUCTASE"/>
    <property type="match status" value="1"/>
</dbReference>
<dbReference type="Pfam" id="PF00745">
    <property type="entry name" value="GlutR_dimer"/>
    <property type="match status" value="1"/>
</dbReference>
<dbReference type="Pfam" id="PF05201">
    <property type="entry name" value="GlutR_N"/>
    <property type="match status" value="1"/>
</dbReference>
<dbReference type="Pfam" id="PF01488">
    <property type="entry name" value="Shikimate_DH"/>
    <property type="match status" value="1"/>
</dbReference>
<dbReference type="PIRSF" id="PIRSF000445">
    <property type="entry name" value="4pyrrol_synth_GluRdtase"/>
    <property type="match status" value="1"/>
</dbReference>
<dbReference type="SUPFAM" id="SSF69742">
    <property type="entry name" value="Glutamyl tRNA-reductase catalytic, N-terminal domain"/>
    <property type="match status" value="1"/>
</dbReference>
<dbReference type="SUPFAM" id="SSF69075">
    <property type="entry name" value="Glutamyl tRNA-reductase dimerization domain"/>
    <property type="match status" value="1"/>
</dbReference>
<dbReference type="SUPFAM" id="SSF51735">
    <property type="entry name" value="NAD(P)-binding Rossmann-fold domains"/>
    <property type="match status" value="1"/>
</dbReference>
<dbReference type="PROSITE" id="PS00747">
    <property type="entry name" value="GLUTR"/>
    <property type="match status" value="1"/>
</dbReference>
<reference key="1">
    <citation type="journal article" date="2008" name="J. Bacteriol.">
        <title>Complete genome sequence of Neisseria gonorrhoeae NCCP11945.</title>
        <authorList>
            <person name="Chung G.T."/>
            <person name="Yoo J.S."/>
            <person name="Oh H.B."/>
            <person name="Lee Y.S."/>
            <person name="Cha S.H."/>
            <person name="Kim S.J."/>
            <person name="Yoo C.K."/>
        </authorList>
    </citation>
    <scope>NUCLEOTIDE SEQUENCE [LARGE SCALE GENOMIC DNA]</scope>
    <source>
        <strain>NCCP11945</strain>
    </source>
</reference>
<accession>B4RNE5</accession>
<comment type="function">
    <text evidence="1">Catalyzes the NADPH-dependent reduction of glutamyl-tRNA(Glu) to glutamate 1-semialdehyde (GSA).</text>
</comment>
<comment type="catalytic activity">
    <reaction evidence="1">
        <text>(S)-4-amino-5-oxopentanoate + tRNA(Glu) + NADP(+) = L-glutamyl-tRNA(Glu) + NADPH + H(+)</text>
        <dbReference type="Rhea" id="RHEA:12344"/>
        <dbReference type="Rhea" id="RHEA-COMP:9663"/>
        <dbReference type="Rhea" id="RHEA-COMP:9680"/>
        <dbReference type="ChEBI" id="CHEBI:15378"/>
        <dbReference type="ChEBI" id="CHEBI:57501"/>
        <dbReference type="ChEBI" id="CHEBI:57783"/>
        <dbReference type="ChEBI" id="CHEBI:58349"/>
        <dbReference type="ChEBI" id="CHEBI:78442"/>
        <dbReference type="ChEBI" id="CHEBI:78520"/>
        <dbReference type="EC" id="1.2.1.70"/>
    </reaction>
</comment>
<comment type="pathway">
    <text evidence="1">Porphyrin-containing compound metabolism; protoporphyrin-IX biosynthesis; 5-aminolevulinate from L-glutamyl-tRNA(Glu): step 1/2.</text>
</comment>
<comment type="subunit">
    <text evidence="1">Homodimer.</text>
</comment>
<comment type="domain">
    <text evidence="1">Possesses an unusual extended V-shaped dimeric structure with each monomer consisting of three distinct domains arranged along a curved 'spinal' alpha-helix. The N-terminal catalytic domain specifically recognizes the glutamate moiety of the substrate. The second domain is the NADPH-binding domain, and the third C-terminal domain is responsible for dimerization.</text>
</comment>
<comment type="miscellaneous">
    <text evidence="1">During catalysis, the active site Cys acts as a nucleophile attacking the alpha-carbonyl group of tRNA-bound glutamate with the formation of a thioester intermediate between enzyme and glutamate, and the concomitant release of tRNA(Glu). The thioester intermediate is finally reduced by direct hydride transfer from NADPH, to form the product GSA.</text>
</comment>
<comment type="similarity">
    <text evidence="1">Belongs to the glutamyl-tRNA reductase family.</text>
</comment>
<sequence length="415" mass="45453">MQLTAVGLNHQTAPLSIREKLAFAAAALPEAVRNLARSNAATEAVILSTCNRTELYCVGDSEEIIRWLADYHSLPIEEIRPYLYTLDMQETVRHAFRVACGLDSMVLGEPQILGQIKDAVRAAQEQESMGAKLNALFQKTFSVAKEVRTDTAVGENSVSMASASVKLAEQIFPDIGDLNVLFIGAGEMIELVATYFAAKNPRLMTVANRTLARAQELCDKLGVNAEPCLLSDLPAILHDYDVVVSSTASQLPIVGKGMVERALKQRQSMPLFMLDLAVPRDIEAEVGDLNDAYLYTVDDMVNIVQSGKEARQKAAAAAETLVSEKVAEFVRQQQGRQSVPLIKALRDEGEKARKQVLENAMKQLAKGATAEEVLERLSVQLTNKLLHSPTQTLNKAGEEDKDLVHAVAQIYHLDK</sequence>